<dbReference type="EMBL" id="AM422018">
    <property type="protein sequence ID" value="CAM11606.1"/>
    <property type="molecule type" value="Genomic_DNA"/>
</dbReference>
<dbReference type="SMR" id="B1V9I4"/>
<dbReference type="STRING" id="59748.PA0271"/>
<dbReference type="KEGG" id="pal:PA0271"/>
<dbReference type="eggNOG" id="COG2088">
    <property type="taxonomic scope" value="Bacteria"/>
</dbReference>
<dbReference type="Proteomes" id="UP000008323">
    <property type="component" value="Chromosome"/>
</dbReference>
<dbReference type="GO" id="GO:0000917">
    <property type="term" value="P:division septum assembly"/>
    <property type="evidence" value="ECO:0007669"/>
    <property type="project" value="UniProtKB-KW"/>
</dbReference>
<dbReference type="GO" id="GO:0030435">
    <property type="term" value="P:sporulation resulting in formation of a cellular spore"/>
    <property type="evidence" value="ECO:0007669"/>
    <property type="project" value="InterPro"/>
</dbReference>
<dbReference type="Gene3D" id="3.30.1120.40">
    <property type="entry name" value="Stage V sporulation protein G"/>
    <property type="match status" value="1"/>
</dbReference>
<dbReference type="HAMAP" id="MF_00819">
    <property type="entry name" value="SpoVG"/>
    <property type="match status" value="1"/>
</dbReference>
<dbReference type="InterPro" id="IPR007170">
    <property type="entry name" value="SpoVG"/>
</dbReference>
<dbReference type="InterPro" id="IPR036751">
    <property type="entry name" value="SpoVG_sf"/>
</dbReference>
<dbReference type="NCBIfam" id="NF009749">
    <property type="entry name" value="PRK13259.1"/>
    <property type="match status" value="1"/>
</dbReference>
<dbReference type="PANTHER" id="PTHR38429">
    <property type="entry name" value="SEPTATION PROTEIN SPOVG-RELATED"/>
    <property type="match status" value="1"/>
</dbReference>
<dbReference type="PANTHER" id="PTHR38429:SF1">
    <property type="entry name" value="SEPTATION PROTEIN SPOVG-RELATED"/>
    <property type="match status" value="1"/>
</dbReference>
<dbReference type="Pfam" id="PF04026">
    <property type="entry name" value="SpoVG"/>
    <property type="match status" value="1"/>
</dbReference>
<dbReference type="SUPFAM" id="SSF160537">
    <property type="entry name" value="SpoVG-like"/>
    <property type="match status" value="1"/>
</dbReference>
<feature type="chain" id="PRO_1000196504" description="Putative septation protein SpoVG">
    <location>
        <begin position="1"/>
        <end position="96"/>
    </location>
</feature>
<protein>
    <recommendedName>
        <fullName evidence="1">Putative septation protein SpoVG</fullName>
    </recommendedName>
</protein>
<keyword id="KW-0131">Cell cycle</keyword>
<keyword id="KW-0132">Cell division</keyword>
<keyword id="KW-1185">Reference proteome</keyword>
<keyword id="KW-0717">Septation</keyword>
<sequence>MKVTDVKIRKINGESRLRGVASIAFDDCFVVNDIRIIEGEKGIFIAMPSRKTTKGTFRDIAHPVNTETRQVIEESILTKYQDVLNNPVEDKPEQEN</sequence>
<name>SP5G_PHYAS</name>
<organism>
    <name type="scientific">Phytoplasma australiense</name>
    <dbReference type="NCBI Taxonomy" id="59748"/>
    <lineage>
        <taxon>Bacteria</taxon>
        <taxon>Bacillati</taxon>
        <taxon>Mycoplasmatota</taxon>
        <taxon>Mollicutes</taxon>
        <taxon>Acholeplasmatales</taxon>
        <taxon>Acholeplasmataceae</taxon>
        <taxon>Candidatus Phytoplasma</taxon>
        <taxon>16SrXII (Stolbur group)</taxon>
    </lineage>
</organism>
<proteinExistence type="inferred from homology"/>
<comment type="function">
    <text evidence="1">Could be involved in septation.</text>
</comment>
<comment type="similarity">
    <text evidence="1">Belongs to the SpoVG family.</text>
</comment>
<reference key="1">
    <citation type="journal article" date="2008" name="J. Bacteriol.">
        <title>Comparative genome analysis of 'Candidatus Phytoplasma australiense' (subgroup tuf-Australia I; rp-A) and 'Ca. Phytoplasma asteris' strains OY-M and AY-WB.</title>
        <authorList>
            <person name="Tran-Nguyen L.T."/>
            <person name="Kube M."/>
            <person name="Schneider B."/>
            <person name="Reinhardt R."/>
            <person name="Gibb K.S."/>
        </authorList>
    </citation>
    <scope>NUCLEOTIDE SEQUENCE [LARGE SCALE GENOMIC DNA]</scope>
</reference>
<accession>B1V9I4</accession>
<evidence type="ECO:0000255" key="1">
    <source>
        <dbReference type="HAMAP-Rule" id="MF_00819"/>
    </source>
</evidence>
<gene>
    <name evidence="1" type="primary">spoVG</name>
    <name type="ordered locus">PA0271</name>
</gene>